<dbReference type="PIR" id="A02850">
    <property type="entry name" value="KRGLBS"/>
</dbReference>
<dbReference type="iPTMnet" id="P02451"/>
<dbReference type="GO" id="GO:0005882">
    <property type="term" value="C:intermediate filament"/>
    <property type="evidence" value="ECO:0007669"/>
    <property type="project" value="UniProtKB-KW"/>
</dbReference>
<dbReference type="GO" id="GO:0005200">
    <property type="term" value="F:structural constituent of cytoskeleton"/>
    <property type="evidence" value="ECO:0007669"/>
    <property type="project" value="InterPro"/>
</dbReference>
<dbReference type="InterPro" id="IPR003461">
    <property type="entry name" value="Keratin"/>
</dbReference>
<dbReference type="PANTHER" id="PTHR31203">
    <property type="entry name" value="BETA-KERATIN-RELATED PROTEIN-RELATED"/>
    <property type="match status" value="1"/>
</dbReference>
<dbReference type="PANTHER" id="PTHR31203:SF1">
    <property type="entry name" value="BETA-KERATIN-RELATED PROTEIN-RELATED"/>
    <property type="match status" value="1"/>
</dbReference>
<dbReference type="Pfam" id="PF02422">
    <property type="entry name" value="Keratin"/>
    <property type="match status" value="1"/>
</dbReference>
<name>KRFT_CHRNO</name>
<organism>
    <name type="scientific">Chroicocephalus novaehollandiae</name>
    <name type="common">Silver gull</name>
    <name type="synonym">Larus novaehollandiae</name>
    <dbReference type="NCBI Taxonomy" id="2547444"/>
    <lineage>
        <taxon>Eukaryota</taxon>
        <taxon>Metazoa</taxon>
        <taxon>Chordata</taxon>
        <taxon>Craniata</taxon>
        <taxon>Vertebrata</taxon>
        <taxon>Euteleostomi</taxon>
        <taxon>Archelosauria</taxon>
        <taxon>Archosauria</taxon>
        <taxon>Dinosauria</taxon>
        <taxon>Saurischia</taxon>
        <taxon>Theropoda</taxon>
        <taxon>Coelurosauria</taxon>
        <taxon>Aves</taxon>
        <taxon>Neognathae</taxon>
        <taxon>Neoaves</taxon>
        <taxon>Charadriiformes</taxon>
        <taxon>Laridae</taxon>
        <taxon>Chroicocephalus</taxon>
    </lineage>
</organism>
<reference key="1">
    <citation type="journal article" date="1974" name="Aust. J. Biol. Sci.">
        <title>Amino acid sequence of a feather keratin from silver gull (Larus novae-hollandiae) and comparison with one from emu (Dromaius novae-hollandiae).</title>
        <authorList>
            <person name="O'Donnell I.J."/>
            <person name="Inglis A.S."/>
        </authorList>
    </citation>
    <scope>PROTEIN SEQUENCE</scope>
    <scope>ACETYLATION AT ALA-1</scope>
    <source>
        <tissue>Feather calamus</tissue>
    </source>
</reference>
<keyword id="KW-0007">Acetylation</keyword>
<keyword id="KW-0903">Direct protein sequencing</keyword>
<keyword id="KW-0416">Keratin</keyword>
<accession>P02451</accession>
<protein>
    <recommendedName>
        <fullName>Feather keratin</fullName>
        <shortName>F-ker</shortName>
    </recommendedName>
</protein>
<feature type="chain" id="PRO_0000097007" description="Feather keratin">
    <location>
        <begin position="1"/>
        <end position="98"/>
    </location>
</feature>
<feature type="modified residue" description="N-acetylalanine" evidence="1">
    <location>
        <position position="1"/>
    </location>
</feature>
<feature type="sequence variant">
    <original>V</original>
    <variation>Q</variation>
    <location>
        <position position="39"/>
    </location>
</feature>
<feature type="sequence variant">
    <original>S</original>
    <variation>T</variation>
    <location>
        <position position="48"/>
    </location>
</feature>
<feature type="sequence variant">
    <original>A</original>
    <variation>V</variation>
    <location>
        <position position="55"/>
    </location>
</feature>
<feature type="sequence variant">
    <original>V</original>
    <variation>A</variation>
    <location>
        <position position="56"/>
    </location>
</feature>
<feature type="sequence variant">
    <original>S</original>
    <variation>A</variation>
    <location>
        <position position="62"/>
    </location>
</feature>
<feature type="sequence variant">
    <original>S</original>
    <variation>A</variation>
    <location>
        <position position="63"/>
    </location>
</feature>
<feature type="sequence variant">
    <original>Y</original>
    <variation>I</variation>
    <location>
        <position position="76"/>
    </location>
</feature>
<feature type="sequence variant">
    <original>G</original>
    <variation>S</variation>
    <location>
        <position position="78"/>
    </location>
</feature>
<feature type="sequence variant">
    <original>G</original>
    <variation>Y</variation>
    <location>
        <position position="80"/>
    </location>
</feature>
<feature type="sequence variant">
    <original>F</original>
    <variation>Y</variation>
    <location>
        <position position="89"/>
    </location>
</feature>
<feature type="unsure residue" description="D or N">
    <location>
        <position position="4"/>
    </location>
</feature>
<feature type="unsure residue" description="E or Q">
    <location>
        <position position="27"/>
    </location>
</feature>
<feature type="unsure residue">
    <location>
        <begin position="75"/>
        <end position="83"/>
    </location>
</feature>
<sequence>ACNDLCGPCGPTPLANSCNEPCVRQCEASRVVIQPSTVVVTLPGPILSSFPQSTAVGGSASSSVGNELLASQGVPYFGGGFGLGGLGCFSGRRGCYPC</sequence>
<proteinExistence type="evidence at protein level"/>
<evidence type="ECO:0000269" key="1">
    <source>
    </source>
</evidence>
<evidence type="ECO:0000305" key="2"/>
<comment type="subunit">
    <text>The avian keratins (F-ker, S-ker, C-ker and B-ker) are a complex mixture of very similar polypeptides.</text>
</comment>
<comment type="similarity">
    <text evidence="2">Belongs to the avian keratin family.</text>
</comment>